<sequence length="941" mass="103045">MVERRNPLVLSSTRSTLRSVLNSSQPSSADGDRVLNKDGDLLRGNARLSAGILRWRKDGENVSDAKLDSLDDSALVGLSTQLLKRLSINSGSLVVVKNIEIGIQRVAQVVVLDPPKTTLEDASLTQVPVSDSLHTMLVFPTYDLMGQQLLDQEVAYLSPMLAFNLSLHISCLKSLVHRGNGVLEKYFEAKCDEEFIGKSAEDGSKIGLDLEPVSQVPGYASHLRVSFVKIPECGTIPSLKVNSSFEAEERQGLIDSALQKYFGTDRQLSRGDIFRIYIDWNCGSSICNPCSQRLCSESDDYIYFKVIAMEPSNERFLRVNHSQTALVLGGTVSSGLPPDLLVYRSKVPMPLQEETVNILASVLSPPLCPSALASKLRVAVLLHGIPGCGKRTVVKYVARRLGLHVVEFSCHSLLASSERKTSTALAQTFNMARRYSPTILLLRHFDVFKNLGSQDGSLGDRVGVSFEIASVIRELTEPVSNGDSSMEEKSNSNFSENEVGKFRGHQVLLIASAESTEGISPTIRRCFSHEIRMGSLNDEQRSEMLSQSLQGVSQFLNISSDEFMKGLVGQTSGFLPRDLQALVADAGANLYISQESETKKINSLSDDLHGVDIHQASQIDNSTEKLTAKEDFTKALDRSKKRNASALGAPKVPNVKWDDVGGLEDVKTSILDTVQLPLLHKDLFSSGLRKRSGVLLYGPPGTGKTLLAKAVATECSLNFLSVKGPELINMYIGESEKNVRDIFEKARSARPCVIFFDELDSLAPARGASGDSGGVMDRVVSQMLAEIDGLSDSSQDLFIIGASNRPDLIDPALLRPGRFDKLLYVGVNADASYRERVLKALTRKFKLSEDVSLYSVAKKCPSTFTGADMYALCADAWFQAAKRKVSKSDSGDMPTEEDDPDSVVVEYVDFIKAMDQLSPSLSITELKKYEMLRDQFQGRSS</sequence>
<proteinExistence type="evidence at protein level"/>
<gene>
    <name evidence="10" type="primary">PEX6</name>
    <name evidence="12" type="ordered locus">At1g03000</name>
    <name evidence="13" type="ORF">F10O3.18</name>
</gene>
<accession>Q8RY16</accession>
<accession>Q9SA70</accession>
<keyword id="KW-0067">ATP-binding</keyword>
<keyword id="KW-0963">Cytoplasm</keyword>
<keyword id="KW-0378">Hydrolase</keyword>
<keyword id="KW-0472">Membrane</keyword>
<keyword id="KW-0547">Nucleotide-binding</keyword>
<keyword id="KW-0576">Peroxisome</keyword>
<keyword id="KW-0962">Peroxisome biogenesis</keyword>
<keyword id="KW-0653">Protein transport</keyword>
<keyword id="KW-1185">Reference proteome</keyword>
<keyword id="KW-0813">Transport</keyword>
<dbReference type="EC" id="3.6.4.-" evidence="2"/>
<dbReference type="EMBL" id="AY333116">
    <property type="protein sequence ID" value="AAQ90161.1"/>
    <property type="molecule type" value="mRNA"/>
</dbReference>
<dbReference type="EMBL" id="AC006550">
    <property type="protein sequence ID" value="AAD25809.1"/>
    <property type="status" value="ALT_SEQ"/>
    <property type="molecule type" value="Genomic_DNA"/>
</dbReference>
<dbReference type="EMBL" id="CP002684">
    <property type="protein sequence ID" value="AEE27513.1"/>
    <property type="molecule type" value="Genomic_DNA"/>
</dbReference>
<dbReference type="EMBL" id="AY078962">
    <property type="protein sequence ID" value="AAL84960.1"/>
    <property type="molecule type" value="mRNA"/>
</dbReference>
<dbReference type="EMBL" id="BT001151">
    <property type="protein sequence ID" value="AAN64542.1"/>
    <property type="molecule type" value="mRNA"/>
</dbReference>
<dbReference type="PIR" id="F86160">
    <property type="entry name" value="F86160"/>
</dbReference>
<dbReference type="RefSeq" id="NP_171799.2">
    <property type="nucleotide sequence ID" value="NM_100181.5"/>
</dbReference>
<dbReference type="SMR" id="Q8RY16"/>
<dbReference type="BioGRID" id="24550">
    <property type="interactions" value="2"/>
</dbReference>
<dbReference type="FunCoup" id="Q8RY16">
    <property type="interactions" value="2412"/>
</dbReference>
<dbReference type="STRING" id="3702.Q8RY16"/>
<dbReference type="TCDB" id="3.A.20.1.2">
    <property type="family name" value="the peroxisomal protein importer (ppi) family"/>
</dbReference>
<dbReference type="PaxDb" id="3702-AT1G03000.1"/>
<dbReference type="ProteomicsDB" id="236404"/>
<dbReference type="EnsemblPlants" id="AT1G03000.1">
    <property type="protein sequence ID" value="AT1G03000.1"/>
    <property type="gene ID" value="AT1G03000"/>
</dbReference>
<dbReference type="GeneID" id="839315"/>
<dbReference type="Gramene" id="AT1G03000.1">
    <property type="protein sequence ID" value="AT1G03000.1"/>
    <property type="gene ID" value="AT1G03000"/>
</dbReference>
<dbReference type="KEGG" id="ath:AT1G03000"/>
<dbReference type="Araport" id="AT1G03000"/>
<dbReference type="TAIR" id="AT1G03000">
    <property type="gene designation" value="PEX6"/>
</dbReference>
<dbReference type="eggNOG" id="KOG0736">
    <property type="taxonomic scope" value="Eukaryota"/>
</dbReference>
<dbReference type="HOGENOM" id="CLU_000688_0_8_1"/>
<dbReference type="InParanoid" id="Q8RY16"/>
<dbReference type="OMA" id="FSVCINW"/>
<dbReference type="OrthoDB" id="2187at2759"/>
<dbReference type="PhylomeDB" id="Q8RY16"/>
<dbReference type="BRENDA" id="3.6.4.7">
    <property type="organism ID" value="399"/>
</dbReference>
<dbReference type="PRO" id="PR:Q8RY16"/>
<dbReference type="Proteomes" id="UP000006548">
    <property type="component" value="Chromosome 1"/>
</dbReference>
<dbReference type="ExpressionAtlas" id="Q8RY16">
    <property type="expression patterns" value="baseline and differential"/>
</dbReference>
<dbReference type="GO" id="GO:0005829">
    <property type="term" value="C:cytosol"/>
    <property type="evidence" value="ECO:0007669"/>
    <property type="project" value="UniProtKB-SubCell"/>
</dbReference>
<dbReference type="GO" id="GO:0005778">
    <property type="term" value="C:peroxisomal membrane"/>
    <property type="evidence" value="ECO:0007669"/>
    <property type="project" value="UniProtKB-SubCell"/>
</dbReference>
<dbReference type="GO" id="GO:0005524">
    <property type="term" value="F:ATP binding"/>
    <property type="evidence" value="ECO:0007669"/>
    <property type="project" value="UniProtKB-KW"/>
</dbReference>
<dbReference type="GO" id="GO:0016887">
    <property type="term" value="F:ATP hydrolysis activity"/>
    <property type="evidence" value="ECO:0007669"/>
    <property type="project" value="InterPro"/>
</dbReference>
<dbReference type="GO" id="GO:0006635">
    <property type="term" value="P:fatty acid beta-oxidation"/>
    <property type="evidence" value="ECO:0000315"/>
    <property type="project" value="TAIR"/>
</dbReference>
<dbReference type="GO" id="GO:0016558">
    <property type="term" value="P:protein import into peroxisome matrix"/>
    <property type="evidence" value="ECO:0000315"/>
    <property type="project" value="TAIR"/>
</dbReference>
<dbReference type="CDD" id="cd19527">
    <property type="entry name" value="RecA-like_PEX6_r2"/>
    <property type="match status" value="1"/>
</dbReference>
<dbReference type="FunFam" id="3.40.50.300:FF:000109">
    <property type="entry name" value="Peroxisomal biogenesis factor 6"/>
    <property type="match status" value="1"/>
</dbReference>
<dbReference type="FunFam" id="1.10.8.60:FF:000077">
    <property type="entry name" value="Peroxisome biogenesis protein 6"/>
    <property type="match status" value="1"/>
</dbReference>
<dbReference type="FunFam" id="3.40.50.300:FF:001716">
    <property type="entry name" value="Peroxisome biogenesis protein 6"/>
    <property type="match status" value="1"/>
</dbReference>
<dbReference type="Gene3D" id="1.10.8.60">
    <property type="match status" value="1"/>
</dbReference>
<dbReference type="Gene3D" id="3.40.50.300">
    <property type="entry name" value="P-loop containing nucleotide triphosphate hydrolases"/>
    <property type="match status" value="2"/>
</dbReference>
<dbReference type="InterPro" id="IPR003593">
    <property type="entry name" value="AAA+_ATPase"/>
</dbReference>
<dbReference type="InterPro" id="IPR050168">
    <property type="entry name" value="AAA_ATPase_domain"/>
</dbReference>
<dbReference type="InterPro" id="IPR003959">
    <property type="entry name" value="ATPase_AAA_core"/>
</dbReference>
<dbReference type="InterPro" id="IPR003960">
    <property type="entry name" value="ATPase_AAA_CS"/>
</dbReference>
<dbReference type="InterPro" id="IPR027417">
    <property type="entry name" value="P-loop_NTPase"/>
</dbReference>
<dbReference type="InterPro" id="IPR047533">
    <property type="entry name" value="RecA-like_PEX6_r2"/>
</dbReference>
<dbReference type="PANTHER" id="PTHR23077">
    <property type="entry name" value="AAA-FAMILY ATPASE"/>
    <property type="match status" value="1"/>
</dbReference>
<dbReference type="PANTHER" id="PTHR23077:SF9">
    <property type="entry name" value="PEROXISOMAL ATPASE PEX6"/>
    <property type="match status" value="1"/>
</dbReference>
<dbReference type="Pfam" id="PF00004">
    <property type="entry name" value="AAA"/>
    <property type="match status" value="2"/>
</dbReference>
<dbReference type="SMART" id="SM00382">
    <property type="entry name" value="AAA"/>
    <property type="match status" value="2"/>
</dbReference>
<dbReference type="SUPFAM" id="SSF52540">
    <property type="entry name" value="P-loop containing nucleoside triphosphate hydrolases"/>
    <property type="match status" value="2"/>
</dbReference>
<dbReference type="PROSITE" id="PS00674">
    <property type="entry name" value="AAA"/>
    <property type="match status" value="1"/>
</dbReference>
<protein>
    <recommendedName>
        <fullName evidence="11">Peroxisomal ATPase PEX6</fullName>
        <ecNumber evidence="2">3.6.4.-</ecNumber>
    </recommendedName>
    <alternativeName>
        <fullName evidence="10">Peroxin-6</fullName>
        <shortName evidence="10">AtPEX6</shortName>
    </alternativeName>
    <alternativeName>
        <fullName evidence="10">Peroxisome biogenesis protein 6</fullName>
    </alternativeName>
</protein>
<reference key="1">
    <citation type="journal article" date="2004" name="Proc. Natl. Acad. Sci. U.S.A.">
        <title>An Arabidopsis indole-3-butyric acid-response mutant defective in PEROXIN6, an apparent ATPase implicated in peroxisomal function.</title>
        <authorList>
            <person name="Zolman B.K."/>
            <person name="Bartel B."/>
        </authorList>
    </citation>
    <scope>NUCLEOTIDE SEQUENCE [MRNA]</scope>
    <scope>FUNCTION</scope>
    <scope>MUTAGENESIS OF ARG-766</scope>
</reference>
<reference key="2">
    <citation type="journal article" date="2000" name="Nature">
        <title>Sequence and analysis of chromosome 1 of the plant Arabidopsis thaliana.</title>
        <authorList>
            <person name="Theologis A."/>
            <person name="Ecker J.R."/>
            <person name="Palm C.J."/>
            <person name="Federspiel N.A."/>
            <person name="Kaul S."/>
            <person name="White O."/>
            <person name="Alonso J."/>
            <person name="Altafi H."/>
            <person name="Araujo R."/>
            <person name="Bowman C.L."/>
            <person name="Brooks S.Y."/>
            <person name="Buehler E."/>
            <person name="Chan A."/>
            <person name="Chao Q."/>
            <person name="Chen H."/>
            <person name="Cheuk R.F."/>
            <person name="Chin C.W."/>
            <person name="Chung M.K."/>
            <person name="Conn L."/>
            <person name="Conway A.B."/>
            <person name="Conway A.R."/>
            <person name="Creasy T.H."/>
            <person name="Dewar K."/>
            <person name="Dunn P."/>
            <person name="Etgu P."/>
            <person name="Feldblyum T.V."/>
            <person name="Feng J.-D."/>
            <person name="Fong B."/>
            <person name="Fujii C.Y."/>
            <person name="Gill J.E."/>
            <person name="Goldsmith A.D."/>
            <person name="Haas B."/>
            <person name="Hansen N.F."/>
            <person name="Hughes B."/>
            <person name="Huizar L."/>
            <person name="Hunter J.L."/>
            <person name="Jenkins J."/>
            <person name="Johnson-Hopson C."/>
            <person name="Khan S."/>
            <person name="Khaykin E."/>
            <person name="Kim C.J."/>
            <person name="Koo H.L."/>
            <person name="Kremenetskaia I."/>
            <person name="Kurtz D.B."/>
            <person name="Kwan A."/>
            <person name="Lam B."/>
            <person name="Langin-Hooper S."/>
            <person name="Lee A."/>
            <person name="Lee J.M."/>
            <person name="Lenz C.A."/>
            <person name="Li J.H."/>
            <person name="Li Y.-P."/>
            <person name="Lin X."/>
            <person name="Liu S.X."/>
            <person name="Liu Z.A."/>
            <person name="Luros J.S."/>
            <person name="Maiti R."/>
            <person name="Marziali A."/>
            <person name="Militscher J."/>
            <person name="Miranda M."/>
            <person name="Nguyen M."/>
            <person name="Nierman W.C."/>
            <person name="Osborne B.I."/>
            <person name="Pai G."/>
            <person name="Peterson J."/>
            <person name="Pham P.K."/>
            <person name="Rizzo M."/>
            <person name="Rooney T."/>
            <person name="Rowley D."/>
            <person name="Sakano H."/>
            <person name="Salzberg S.L."/>
            <person name="Schwartz J.R."/>
            <person name="Shinn P."/>
            <person name="Southwick A.M."/>
            <person name="Sun H."/>
            <person name="Tallon L.J."/>
            <person name="Tambunga G."/>
            <person name="Toriumi M.J."/>
            <person name="Town C.D."/>
            <person name="Utterback T."/>
            <person name="Van Aken S."/>
            <person name="Vaysberg M."/>
            <person name="Vysotskaia V.S."/>
            <person name="Walker M."/>
            <person name="Wu D."/>
            <person name="Yu G."/>
            <person name="Fraser C.M."/>
            <person name="Venter J.C."/>
            <person name="Davis R.W."/>
        </authorList>
    </citation>
    <scope>NUCLEOTIDE SEQUENCE [LARGE SCALE GENOMIC DNA]</scope>
    <source>
        <strain>cv. Columbia</strain>
    </source>
</reference>
<reference key="3">
    <citation type="journal article" date="2017" name="Plant J.">
        <title>Araport11: a complete reannotation of the Arabidopsis thaliana reference genome.</title>
        <authorList>
            <person name="Cheng C.Y."/>
            <person name="Krishnakumar V."/>
            <person name="Chan A.P."/>
            <person name="Thibaud-Nissen F."/>
            <person name="Schobel S."/>
            <person name="Town C.D."/>
        </authorList>
    </citation>
    <scope>GENOME REANNOTATION</scope>
    <source>
        <strain>cv. Columbia</strain>
    </source>
</reference>
<reference key="4">
    <citation type="journal article" date="2003" name="Science">
        <title>Empirical analysis of transcriptional activity in the Arabidopsis genome.</title>
        <authorList>
            <person name="Yamada K."/>
            <person name="Lim J."/>
            <person name="Dale J.M."/>
            <person name="Chen H."/>
            <person name="Shinn P."/>
            <person name="Palm C.J."/>
            <person name="Southwick A.M."/>
            <person name="Wu H.C."/>
            <person name="Kim C.J."/>
            <person name="Nguyen M."/>
            <person name="Pham P.K."/>
            <person name="Cheuk R.F."/>
            <person name="Karlin-Newmann G."/>
            <person name="Liu S.X."/>
            <person name="Lam B."/>
            <person name="Sakano H."/>
            <person name="Wu T."/>
            <person name="Yu G."/>
            <person name="Miranda M."/>
            <person name="Quach H.L."/>
            <person name="Tripp M."/>
            <person name="Chang C.H."/>
            <person name="Lee J.M."/>
            <person name="Toriumi M.J."/>
            <person name="Chan M.M."/>
            <person name="Tang C.C."/>
            <person name="Onodera C.S."/>
            <person name="Deng J.M."/>
            <person name="Akiyama K."/>
            <person name="Ansari Y."/>
            <person name="Arakawa T."/>
            <person name="Banh J."/>
            <person name="Banno F."/>
            <person name="Bowser L."/>
            <person name="Brooks S.Y."/>
            <person name="Carninci P."/>
            <person name="Chao Q."/>
            <person name="Choy N."/>
            <person name="Enju A."/>
            <person name="Goldsmith A.D."/>
            <person name="Gurjal M."/>
            <person name="Hansen N.F."/>
            <person name="Hayashizaki Y."/>
            <person name="Johnson-Hopson C."/>
            <person name="Hsuan V.W."/>
            <person name="Iida K."/>
            <person name="Karnes M."/>
            <person name="Khan S."/>
            <person name="Koesema E."/>
            <person name="Ishida J."/>
            <person name="Jiang P.X."/>
            <person name="Jones T."/>
            <person name="Kawai J."/>
            <person name="Kamiya A."/>
            <person name="Meyers C."/>
            <person name="Nakajima M."/>
            <person name="Narusaka M."/>
            <person name="Seki M."/>
            <person name="Sakurai T."/>
            <person name="Satou M."/>
            <person name="Tamse R."/>
            <person name="Vaysberg M."/>
            <person name="Wallender E.K."/>
            <person name="Wong C."/>
            <person name="Yamamura Y."/>
            <person name="Yuan S."/>
            <person name="Shinozaki K."/>
            <person name="Davis R.W."/>
            <person name="Theologis A."/>
            <person name="Ecker J.R."/>
        </authorList>
    </citation>
    <scope>NUCLEOTIDE SEQUENCE [LARGE SCALE MRNA]</scope>
    <source>
        <strain>cv. Columbia</strain>
    </source>
</reference>
<reference key="5">
    <citation type="journal article" date="2007" name="Phytochemistry">
        <title>Jasmonate biosynthesis in Arabidopsis thaliana requires peroxisomal beta-oxidation enzymes--additional proof by properties of pex6 and aim1.</title>
        <authorList>
            <person name="Delker C."/>
            <person name="Zolman B.K."/>
            <person name="Miersch O."/>
            <person name="Wasternack C."/>
        </authorList>
    </citation>
    <scope>FUNCTION</scope>
</reference>
<reference key="6">
    <citation type="journal article" date="2007" name="Plant Cell Physiol.">
        <title>Functional classification of Arabidopsis peroxisome biogenesis factors proposed from analyses of knockdown mutants.</title>
        <authorList>
            <person name="Nito K."/>
            <person name="Kamigaki A."/>
            <person name="Kondo M."/>
            <person name="Hayashi M."/>
            <person name="Nishimura M."/>
        </authorList>
    </citation>
    <scope>FUNCTION</scope>
</reference>
<reference key="7">
    <citation type="journal article" date="2009" name="Proc. Natl. Acad. Sci. U.S.A.">
        <title>Peroxisome-associated matrix protein degradation in Arabidopsis.</title>
        <authorList>
            <person name="Lingard M.J."/>
            <person name="Monroe-Augustus M."/>
            <person name="Bartel B."/>
        </authorList>
    </citation>
    <scope>FUNCTION</scope>
</reference>
<reference key="8">
    <citation type="journal article" date="2011" name="Plant Cell">
        <title>Arabidopsis ABERRANT PEROXISOME MORPHOLOGY9 is a peroxin that recruits the PEX1-PEX6 complex to peroxisomes.</title>
        <authorList>
            <person name="Goto S."/>
            <person name="Mano S."/>
            <person name="Nakamori C."/>
            <person name="Nishimura M."/>
        </authorList>
    </citation>
    <scope>SUBCELLULAR LOCATION</scope>
    <scope>INTERACTION WITH PEX1 AND APME9</scope>
</reference>
<reference key="9">
    <citation type="journal article" date="2011" name="Traffic">
        <title>Reducing PEX13 expression ameliorates physiological defects of late-acting peroxin mutants.</title>
        <authorList>
            <person name="Ratzel S.E."/>
            <person name="Lingard M.J."/>
            <person name="Woodward A.W."/>
            <person name="Bartel B."/>
        </authorList>
    </citation>
    <scope>FUNCTION</scope>
</reference>
<comment type="function">
    <text evidence="2 4 5 6 7 8">Component of the PEX1-PEX6 AAA ATPase complex, a protein dislocase complex that mediates the ATP-dependent extraction of the PEX5 receptor from peroxisomal membranes, an essential step for PEX5 recycling (PubMed:14745029, PubMed:17478547, PubMed:20969679). Specifically recognizes PEX5 monoubiquitinated at 'Cys-11', and pulls it out of the peroxisome lumen through the PEX2-PEX10-PEX12 retrotranslocation channel (By similarity). Extraction by the PEX1-PEX6 AAA ATPase complex is accompanied by unfolding of the TPR repeats and release of bound cargo from PEX5 (By similarity). Required for jasmonate biosynthesis (PubMed:17544464). Necessary for the developmental elimination of obsolete peroxisome matix proteins (PubMed:19246395).</text>
</comment>
<comment type="catalytic activity">
    <reaction evidence="2">
        <text>ATP + H2O = ADP + phosphate + H(+)</text>
        <dbReference type="Rhea" id="RHEA:13065"/>
        <dbReference type="ChEBI" id="CHEBI:15377"/>
        <dbReference type="ChEBI" id="CHEBI:15378"/>
        <dbReference type="ChEBI" id="CHEBI:30616"/>
        <dbReference type="ChEBI" id="CHEBI:43474"/>
        <dbReference type="ChEBI" id="CHEBI:456216"/>
    </reaction>
    <physiologicalReaction direction="left-to-right" evidence="2">
        <dbReference type="Rhea" id="RHEA:13066"/>
    </physiologicalReaction>
</comment>
<comment type="subunit">
    <text evidence="9">Interacts with PEX1; forming the PEX1-PEX6 AAA ATPase complex, which is composed of a heterohexamer formed by a trimer of PEX1-PEX6 dimers (PubMed:21487094). Interacts with APME9 (PubMed:21487094).</text>
</comment>
<comment type="subcellular location">
    <subcellularLocation>
        <location evidence="9">Cytoplasm</location>
        <location evidence="9">Cytosol</location>
    </subcellularLocation>
    <subcellularLocation>
        <location evidence="9">Peroxisome membrane</location>
    </subcellularLocation>
    <text evidence="9">Localizes to the peroxisome when interacting with APEM9.</text>
</comment>
<comment type="similarity">
    <text evidence="11">Belongs to the AAA ATPase family.</text>
</comment>
<comment type="sequence caution" evidence="11">
    <conflict type="erroneous gene model prediction">
        <sequence resource="EMBL-CDS" id="AAD25809"/>
    </conflict>
</comment>
<organism>
    <name type="scientific">Arabidopsis thaliana</name>
    <name type="common">Mouse-ear cress</name>
    <dbReference type="NCBI Taxonomy" id="3702"/>
    <lineage>
        <taxon>Eukaryota</taxon>
        <taxon>Viridiplantae</taxon>
        <taxon>Streptophyta</taxon>
        <taxon>Embryophyta</taxon>
        <taxon>Tracheophyta</taxon>
        <taxon>Spermatophyta</taxon>
        <taxon>Magnoliopsida</taxon>
        <taxon>eudicotyledons</taxon>
        <taxon>Gunneridae</taxon>
        <taxon>Pentapetalae</taxon>
        <taxon>rosids</taxon>
        <taxon>malvids</taxon>
        <taxon>Brassicales</taxon>
        <taxon>Brassicaceae</taxon>
        <taxon>Camelineae</taxon>
        <taxon>Arabidopsis</taxon>
    </lineage>
</organism>
<feature type="chain" id="PRO_0000404529" description="Peroxisomal ATPase PEX6">
    <location>
        <begin position="1"/>
        <end position="941"/>
    </location>
</feature>
<feature type="binding site" evidence="3">
    <location>
        <begin position="384"/>
        <end position="391"/>
    </location>
    <ligand>
        <name>ATP</name>
        <dbReference type="ChEBI" id="CHEBI:30616"/>
    </ligand>
</feature>
<feature type="binding site" evidence="1">
    <location>
        <begin position="698"/>
        <end position="705"/>
    </location>
    <ligand>
        <name>ATP</name>
        <dbReference type="ChEBI" id="CHEBI:30616"/>
    </ligand>
</feature>
<feature type="mutagenesis site" description="In pex6-1; Loss of sensitivity to exogenous indole-3-butyric acid (IBA)and decreased number of peroxisomes. Larger size of the peroxisomes." evidence="4">
    <original>R</original>
    <variation>Q</variation>
    <location>
        <position position="766"/>
    </location>
</feature>
<name>PEX6_ARATH</name>
<evidence type="ECO:0000250" key="1"/>
<evidence type="ECO:0000250" key="2">
    <source>
        <dbReference type="UniProtKB" id="Q13608"/>
    </source>
</evidence>
<evidence type="ECO:0000255" key="3"/>
<evidence type="ECO:0000269" key="4">
    <source>
    </source>
</evidence>
<evidence type="ECO:0000269" key="5">
    <source>
    </source>
</evidence>
<evidence type="ECO:0000269" key="6">
    <source>
    </source>
</evidence>
<evidence type="ECO:0000269" key="7">
    <source>
    </source>
</evidence>
<evidence type="ECO:0000269" key="8">
    <source>
    </source>
</evidence>
<evidence type="ECO:0000269" key="9">
    <source>
    </source>
</evidence>
<evidence type="ECO:0000303" key="10">
    <source>
    </source>
</evidence>
<evidence type="ECO:0000305" key="11"/>
<evidence type="ECO:0000312" key="12">
    <source>
        <dbReference type="Araport" id="AT1G03000"/>
    </source>
</evidence>
<evidence type="ECO:0000312" key="13">
    <source>
        <dbReference type="EMBL" id="AAD25809.1"/>
    </source>
</evidence>